<reference key="1">
    <citation type="journal article" date="2007" name="Phytochemistry">
        <title>Isolation and characterization of genes from the marine microalga Pavlova salina encoding three front-end desaturases involved in docosahexaenoic acid biosynthesis.</title>
        <authorList>
            <person name="Zhou X.R."/>
            <person name="Robert S.S."/>
            <person name="Petrie J.R."/>
            <person name="Frampton D.M."/>
            <person name="Mansour M.P."/>
            <person name="Blackburn S.I."/>
            <person name="Nichols P.D."/>
            <person name="Green A.G."/>
            <person name="Singh S.P."/>
        </authorList>
    </citation>
    <scope>NUCLEOTIDE SEQUENCE [MRNA]</scope>
    <scope>FUNCTION</scope>
    <scope>CATALYTIC ACTIVITY</scope>
    <source>
        <strain evidence="9">CS-49</strain>
    </source>
</reference>
<gene>
    <name evidence="6" type="primary">D5Des</name>
</gene>
<evidence type="ECO:0000250" key="1">
    <source>
        <dbReference type="UniProtKB" id="O00767"/>
    </source>
</evidence>
<evidence type="ECO:0000255" key="2"/>
<evidence type="ECO:0000255" key="3">
    <source>
        <dbReference type="PROSITE-ProRule" id="PRU00279"/>
    </source>
</evidence>
<evidence type="ECO:0000256" key="4">
    <source>
        <dbReference type="SAM" id="MobiDB-lite"/>
    </source>
</evidence>
<evidence type="ECO:0000269" key="5">
    <source>
    </source>
</evidence>
<evidence type="ECO:0000303" key="6">
    <source>
    </source>
</evidence>
<evidence type="ECO:0000305" key="7"/>
<evidence type="ECO:0000305" key="8">
    <source>
    </source>
</evidence>
<evidence type="ECO:0000312" key="9">
    <source>
        <dbReference type="EMBL" id="ABL96295.1"/>
    </source>
</evidence>
<protein>
    <recommendedName>
        <fullName>Acyl-lipid (8-3)-desaturase</fullName>
        <ecNumber evidence="8">1.14.19.30</ecNumber>
    </recommendedName>
    <alternativeName>
        <fullName evidence="7">AN Delta(5)-fatty-acid desaturase</fullName>
    </alternativeName>
    <alternativeName>
        <fullName evidence="7">Acyl-lipid 5-desaturase</fullName>
    </alternativeName>
    <alternativeName>
        <fullName evidence="6">Delta-5 desaturase</fullName>
    </alternativeName>
</protein>
<feature type="chain" id="PRO_0000434760" description="Acyl-lipid (8-3)-desaturase">
    <location>
        <begin position="1"/>
        <end position="425"/>
    </location>
</feature>
<feature type="transmembrane region" description="Helical" evidence="2">
    <location>
        <begin position="134"/>
        <end position="154"/>
    </location>
</feature>
<feature type="transmembrane region" description="Helical" evidence="2">
    <location>
        <begin position="175"/>
        <end position="197"/>
    </location>
</feature>
<feature type="transmembrane region" description="Helical" evidence="2">
    <location>
        <begin position="241"/>
        <end position="261"/>
    </location>
</feature>
<feature type="transmembrane region" description="Helical" evidence="2">
    <location>
        <begin position="297"/>
        <end position="317"/>
    </location>
</feature>
<feature type="domain" description="Cytochrome b5 heme-binding" evidence="3">
    <location>
        <begin position="18"/>
        <end position="93"/>
    </location>
</feature>
<feature type="region of interest" description="Disordered" evidence="4">
    <location>
        <begin position="1"/>
        <end position="25"/>
    </location>
</feature>
<feature type="short sequence motif" description="Histidine box-1" evidence="7">
    <location>
        <begin position="164"/>
        <end position="168"/>
    </location>
</feature>
<feature type="short sequence motif" description="Histidine box-2" evidence="7">
    <location>
        <begin position="201"/>
        <end position="206"/>
    </location>
</feature>
<feature type="short sequence motif" description="Histidine box-3" evidence="7">
    <location>
        <begin position="365"/>
        <end position="369"/>
    </location>
</feature>
<feature type="binding site" description="axial binding residue" evidence="3">
    <location>
        <position position="47"/>
    </location>
    <ligand>
        <name>heme</name>
        <dbReference type="ChEBI" id="CHEBI:30413"/>
    </ligand>
    <ligandPart>
        <name>Fe</name>
        <dbReference type="ChEBI" id="CHEBI:18248"/>
    </ligandPart>
</feature>
<feature type="binding site" description="axial binding residue" evidence="3">
    <location>
        <position position="69"/>
    </location>
    <ligand>
        <name>heme</name>
        <dbReference type="ChEBI" id="CHEBI:30413"/>
    </ligand>
    <ligandPart>
        <name>Fe</name>
        <dbReference type="ChEBI" id="CHEBI:18248"/>
    </ligandPart>
</feature>
<name>D5FAD_REBSA</name>
<organism>
    <name type="scientific">Rebecca salina</name>
    <name type="common">Marine microalga</name>
    <name type="synonym">Pavlova salina</name>
    <dbReference type="NCBI Taxonomy" id="561169"/>
    <lineage>
        <taxon>Eukaryota</taxon>
        <taxon>Haptista</taxon>
        <taxon>Haptophyta</taxon>
        <taxon>Pavlovales</taxon>
        <taxon>Pavlovaceae</taxon>
        <taxon>Rebecca</taxon>
    </lineage>
</organism>
<proteinExistence type="evidence at protein level"/>
<accession>A4KDP0</accession>
<comment type="function">
    <text evidence="5">Fatty acid desaturase that introduces a cis double bond at the 5-position in 20-carbon polyunsaturated fatty acids incorporated in a glycerolipid that contain a Delta(8) double bond.</text>
</comment>
<comment type="catalytic activity">
    <reaction evidence="8">
        <text>an (8Z,11Z,14Z)-icosatrienoyl-containing glycerolipid + 2 Fe(II)-[cytochrome b5] + O2 + 2 H(+) = (5Z,8Z,11Z,14Z)-eicosatetraenoyl-containing glycerolipid + 2 Fe(III)-[cytochrome b5] + 2 H2O</text>
        <dbReference type="Rhea" id="RHEA:46260"/>
        <dbReference type="Rhea" id="RHEA-COMP:10438"/>
        <dbReference type="Rhea" id="RHEA-COMP:10439"/>
        <dbReference type="ChEBI" id="CHEBI:15377"/>
        <dbReference type="ChEBI" id="CHEBI:15378"/>
        <dbReference type="ChEBI" id="CHEBI:15379"/>
        <dbReference type="ChEBI" id="CHEBI:29033"/>
        <dbReference type="ChEBI" id="CHEBI:29034"/>
        <dbReference type="ChEBI" id="CHEBI:90076"/>
        <dbReference type="ChEBI" id="CHEBI:90077"/>
        <dbReference type="EC" id="1.14.19.30"/>
    </reaction>
</comment>
<comment type="catalytic activity">
    <reaction evidence="8">
        <text>an (8Z,11Z,14Z,17Z)-eicosatetraenoyl-containing glycerolipid + 2 Fe(II)-[cytochrome b5] + O2 + 2 H(+) = a (5Z,8Z,11Z,14Z,17Z)-eicosapentaenoyl-containing glycerolipid + 2 Fe(III)-[cytochrome b5] + 2 H2O</text>
        <dbReference type="Rhea" id="RHEA:46264"/>
        <dbReference type="Rhea" id="RHEA-COMP:10438"/>
        <dbReference type="Rhea" id="RHEA-COMP:10439"/>
        <dbReference type="ChEBI" id="CHEBI:15377"/>
        <dbReference type="ChEBI" id="CHEBI:15378"/>
        <dbReference type="ChEBI" id="CHEBI:15379"/>
        <dbReference type="ChEBI" id="CHEBI:29033"/>
        <dbReference type="ChEBI" id="CHEBI:29034"/>
        <dbReference type="ChEBI" id="CHEBI:90082"/>
        <dbReference type="ChEBI" id="CHEBI:90083"/>
        <dbReference type="EC" id="1.14.19.30"/>
    </reaction>
</comment>
<comment type="cofactor">
    <cofactor evidence="1">
        <name>Fe(2+)</name>
        <dbReference type="ChEBI" id="CHEBI:29033"/>
    </cofactor>
</comment>
<comment type="subcellular location">
    <subcellularLocation>
        <location evidence="2">Membrane</location>
        <topology evidence="2">Multi-pass membrane protein</topology>
    </subcellularLocation>
</comment>
<comment type="domain">
    <text evidence="7">The cytochrome b5 heme-binding domain acts as the direct electron donor to the active site of the desaturase, and does not require an external cytochrome.</text>
</comment>
<comment type="similarity">
    <text evidence="7">Belongs to the fatty acid desaturase type 1 family.</text>
</comment>
<sequence length="425" mass="48215">MPPRDSYSYAAPPSAQLHEVDTPQEHDKKELVIGDRAYDVTNFVKRHPGGKIIAYQVGTDATDAYKQFHVRSAKADKMLKSLPSRPVHKGYSPRRADLIADFQEFTKQLEAEGMFEPSLPHVAYRLAEVIAMHVAGAALIWHGYTFAGIAMLGVVQGRCGWLMHEGGHYSLTGNIAFDRAIQVACYGLGCGMSGAWWRNQHNKHHATPQKLQHDVDLDTLPLVAFHERIAAKVKSPAMKAWLSMQAKLFAPVTTLLVALGWQLYLHPRHMLRTKHYDELAMLGIRYGLVGYLAANYGAGYVLACYLLYVQLGAMYIFCNFAVSHTHLPVVEPNEHATWVEYAANHTTNCSPSWWCDWWMSYLNYQIEHHLYPSMPQFRHPKIAPRVKQLFEKHGLHYDVRGYFEAMADTFANLDNVAHAPEKKMQ</sequence>
<dbReference type="EC" id="1.14.19.30" evidence="8"/>
<dbReference type="EMBL" id="DQ995517">
    <property type="protein sequence ID" value="ABL96295.1"/>
    <property type="molecule type" value="mRNA"/>
</dbReference>
<dbReference type="SMR" id="A4KDP0"/>
<dbReference type="BioCyc" id="MetaCyc:MONOMER-16957"/>
<dbReference type="BRENDA" id="1.14.19.30">
    <property type="organism ID" value="14018"/>
</dbReference>
<dbReference type="GO" id="GO:0016020">
    <property type="term" value="C:membrane"/>
    <property type="evidence" value="ECO:0007669"/>
    <property type="project" value="UniProtKB-SubCell"/>
</dbReference>
<dbReference type="GO" id="GO:0102866">
    <property type="term" value="F:acyl-lipid (8-3)-desaturase activity"/>
    <property type="evidence" value="ECO:0007669"/>
    <property type="project" value="UniProtKB-EC"/>
</dbReference>
<dbReference type="GO" id="GO:0020037">
    <property type="term" value="F:heme binding"/>
    <property type="evidence" value="ECO:0007669"/>
    <property type="project" value="InterPro"/>
</dbReference>
<dbReference type="GO" id="GO:0046872">
    <property type="term" value="F:metal ion binding"/>
    <property type="evidence" value="ECO:0007669"/>
    <property type="project" value="UniProtKB-KW"/>
</dbReference>
<dbReference type="GO" id="GO:0016717">
    <property type="term" value="F:oxidoreductase activity, acting on paired donors, with oxidation of a pair of donors resulting in the reduction of molecular oxygen to two molecules of water"/>
    <property type="evidence" value="ECO:0000314"/>
    <property type="project" value="UniProtKB"/>
</dbReference>
<dbReference type="GO" id="GO:0042759">
    <property type="term" value="P:long-chain fatty acid biosynthetic process"/>
    <property type="evidence" value="ECO:0000314"/>
    <property type="project" value="UniProtKB"/>
</dbReference>
<dbReference type="GO" id="GO:0006636">
    <property type="term" value="P:unsaturated fatty acid biosynthetic process"/>
    <property type="evidence" value="ECO:0000314"/>
    <property type="project" value="UniProtKB"/>
</dbReference>
<dbReference type="CDD" id="cd03506">
    <property type="entry name" value="Delta6-FADS-like"/>
    <property type="match status" value="1"/>
</dbReference>
<dbReference type="FunFam" id="3.10.120.10:FF:000031">
    <property type="entry name" value="Acyl-lipid (8-3)-desaturase"/>
    <property type="match status" value="1"/>
</dbReference>
<dbReference type="Gene3D" id="3.10.120.10">
    <property type="entry name" value="Cytochrome b5-like heme/steroid binding domain"/>
    <property type="match status" value="1"/>
</dbReference>
<dbReference type="InterPro" id="IPR001199">
    <property type="entry name" value="Cyt_B5-like_heme/steroid-bd"/>
</dbReference>
<dbReference type="InterPro" id="IPR036400">
    <property type="entry name" value="Cyt_B5-like_heme/steroid_sf"/>
</dbReference>
<dbReference type="InterPro" id="IPR018506">
    <property type="entry name" value="Cyt_B5_heme-BS"/>
</dbReference>
<dbReference type="InterPro" id="IPR005804">
    <property type="entry name" value="FA_desaturase_dom"/>
</dbReference>
<dbReference type="InterPro" id="IPR012171">
    <property type="entry name" value="Fatty_acid_desaturase"/>
</dbReference>
<dbReference type="PANTHER" id="PTHR19353:SF88">
    <property type="entry name" value="DELTA(5) FATTY ACID DESATURASE FAT-4"/>
    <property type="match status" value="1"/>
</dbReference>
<dbReference type="PANTHER" id="PTHR19353">
    <property type="entry name" value="FATTY ACID DESATURASE 2"/>
    <property type="match status" value="1"/>
</dbReference>
<dbReference type="Pfam" id="PF00173">
    <property type="entry name" value="Cyt-b5"/>
    <property type="match status" value="1"/>
</dbReference>
<dbReference type="Pfam" id="PF00487">
    <property type="entry name" value="FA_desaturase"/>
    <property type="match status" value="1"/>
</dbReference>
<dbReference type="PIRSF" id="PIRSF015921">
    <property type="entry name" value="FA_sphinglp_des"/>
    <property type="match status" value="1"/>
</dbReference>
<dbReference type="SMART" id="SM01117">
    <property type="entry name" value="Cyt-b5"/>
    <property type="match status" value="1"/>
</dbReference>
<dbReference type="SUPFAM" id="SSF55856">
    <property type="entry name" value="Cytochrome b5-like heme/steroid binding domain"/>
    <property type="match status" value="1"/>
</dbReference>
<dbReference type="PROSITE" id="PS00191">
    <property type="entry name" value="CYTOCHROME_B5_1"/>
    <property type="match status" value="1"/>
</dbReference>
<dbReference type="PROSITE" id="PS50255">
    <property type="entry name" value="CYTOCHROME_B5_2"/>
    <property type="match status" value="1"/>
</dbReference>
<keyword id="KW-0249">Electron transport</keyword>
<keyword id="KW-0275">Fatty acid biosynthesis</keyword>
<keyword id="KW-0276">Fatty acid metabolism</keyword>
<keyword id="KW-0349">Heme</keyword>
<keyword id="KW-0408">Iron</keyword>
<keyword id="KW-0444">Lipid biosynthesis</keyword>
<keyword id="KW-0443">Lipid metabolism</keyword>
<keyword id="KW-0472">Membrane</keyword>
<keyword id="KW-0479">Metal-binding</keyword>
<keyword id="KW-0560">Oxidoreductase</keyword>
<keyword id="KW-0812">Transmembrane</keyword>
<keyword id="KW-1133">Transmembrane helix</keyword>
<keyword id="KW-0813">Transport</keyword>